<keyword id="KW-1015">Disulfide bond</keyword>
<keyword id="KW-0872">Ion channel impairing toxin</keyword>
<keyword id="KW-0960">Knottin</keyword>
<keyword id="KW-0964">Secreted</keyword>
<keyword id="KW-0732">Signal</keyword>
<keyword id="KW-0800">Toxin</keyword>
<proteinExistence type="inferred from homology"/>
<sequence length="87" mass="10120">MVNMKASMFLTFAGLVLLFVVCHASESEEKEFPKEMLSSIFAVDDDFKQEERDCAGYMRECKEKLCCSGYVCSSRWKWCVLSAPWRR</sequence>
<organism>
    <name type="scientific">Cyriopagopus hainanus</name>
    <name type="common">Chinese bird spider</name>
    <name type="synonym">Haplopelma hainanum</name>
    <dbReference type="NCBI Taxonomy" id="209901"/>
    <lineage>
        <taxon>Eukaryota</taxon>
        <taxon>Metazoa</taxon>
        <taxon>Ecdysozoa</taxon>
        <taxon>Arthropoda</taxon>
        <taxon>Chelicerata</taxon>
        <taxon>Arachnida</taxon>
        <taxon>Araneae</taxon>
        <taxon>Mygalomorphae</taxon>
        <taxon>Theraphosidae</taxon>
        <taxon>Haplopelma</taxon>
    </lineage>
</organism>
<feature type="signal peptide" evidence="3">
    <location>
        <begin position="1"/>
        <end position="24"/>
    </location>
</feature>
<feature type="propeptide" id="PRO_0000400635" evidence="1">
    <location>
        <begin position="25"/>
        <end position="52"/>
    </location>
</feature>
<feature type="peptide" id="PRO_0000400636" description="U3-theraphotoxin-Hhn1c">
    <location>
        <begin position="53"/>
        <end position="87"/>
    </location>
</feature>
<feature type="disulfide bond" evidence="2">
    <location>
        <begin position="54"/>
        <end position="67"/>
    </location>
</feature>
<feature type="disulfide bond" evidence="2">
    <location>
        <begin position="61"/>
        <end position="72"/>
    </location>
</feature>
<feature type="disulfide bond" evidence="2">
    <location>
        <begin position="66"/>
        <end position="79"/>
    </location>
</feature>
<evidence type="ECO:0000250" key="1"/>
<evidence type="ECO:0000250" key="2">
    <source>
        <dbReference type="UniProtKB" id="B3FIS6"/>
    </source>
</evidence>
<evidence type="ECO:0000255" key="3"/>
<evidence type="ECO:0000305" key="4"/>
<accession>D2Y2M3</accession>
<comment type="function">
    <text evidence="1">Ion channel inhibitor.</text>
</comment>
<comment type="subcellular location">
    <subcellularLocation>
        <location evidence="1">Secreted</location>
    </subcellularLocation>
</comment>
<comment type="tissue specificity">
    <text>Expressed by the venom gland.</text>
</comment>
<comment type="domain">
    <text evidence="1">The presence of a 'disulfide through disulfide knot' structurally defines this protein as a knottin.</text>
</comment>
<comment type="similarity">
    <text evidence="4">Belongs to the neurotoxin 10 (Hwtx-1) family. 51 (Hntx-8) subfamily. Hntx-8 sub-subfamily.</text>
</comment>
<name>H8K01_CYRHA</name>
<reference key="1">
    <citation type="journal article" date="2010" name="J. Proteome Res.">
        <title>Molecular diversification of peptide toxins from the tarantula Haplopelma hainanum (Ornithoctonus hainana) venom based on transcriptomic, peptidomic, and genomic analyses.</title>
        <authorList>
            <person name="Tang X."/>
            <person name="Zhang Y."/>
            <person name="Hu W."/>
            <person name="Xu D."/>
            <person name="Tao H."/>
            <person name="Yang X."/>
            <person name="Li Y."/>
            <person name="Jiang L."/>
            <person name="Liang S."/>
        </authorList>
    </citation>
    <scope>NUCLEOTIDE SEQUENCE [LARGE SCALE GENOMIC DNA]</scope>
    <source>
        <tissue>Venom gland</tissue>
    </source>
</reference>
<protein>
    <recommendedName>
        <fullName>U3-theraphotoxin-Hhn1c</fullName>
        <shortName>U3-TRTX-Hhn1c</shortName>
    </recommendedName>
    <alternativeName>
        <fullName>Hainantoxin-VIII-11</fullName>
        <shortName>HNTX-VIII-11</shortName>
    </alternativeName>
</protein>
<dbReference type="EMBL" id="GU293100">
    <property type="protein sequence ID" value="ADB56916.1"/>
    <property type="molecule type" value="Genomic_DNA"/>
</dbReference>
<dbReference type="SMR" id="D2Y2M3"/>
<dbReference type="ArachnoServer" id="AS001628">
    <property type="toxin name" value="U3-theraphotoxin-Hhn1c"/>
</dbReference>
<dbReference type="GO" id="GO:0005576">
    <property type="term" value="C:extracellular region"/>
    <property type="evidence" value="ECO:0007669"/>
    <property type="project" value="UniProtKB-SubCell"/>
</dbReference>
<dbReference type="GO" id="GO:0008200">
    <property type="term" value="F:ion channel inhibitor activity"/>
    <property type="evidence" value="ECO:0007669"/>
    <property type="project" value="InterPro"/>
</dbReference>
<dbReference type="GO" id="GO:0090729">
    <property type="term" value="F:toxin activity"/>
    <property type="evidence" value="ECO:0007669"/>
    <property type="project" value="UniProtKB-KW"/>
</dbReference>
<dbReference type="InterPro" id="IPR011696">
    <property type="entry name" value="Huwentoxin-1"/>
</dbReference>
<dbReference type="InterPro" id="IPR013140">
    <property type="entry name" value="Huwentoxin_CS1"/>
</dbReference>
<dbReference type="Pfam" id="PF07740">
    <property type="entry name" value="Toxin_12"/>
    <property type="match status" value="1"/>
</dbReference>
<dbReference type="SUPFAM" id="SSF57059">
    <property type="entry name" value="omega toxin-like"/>
    <property type="match status" value="1"/>
</dbReference>
<dbReference type="PROSITE" id="PS60021">
    <property type="entry name" value="HWTX_1"/>
    <property type="match status" value="1"/>
</dbReference>